<reference key="1">
    <citation type="journal article" date="2004" name="Science">
        <title>The 1.2-megabase genome sequence of Mimivirus.</title>
        <authorList>
            <person name="Raoult D."/>
            <person name="Audic S."/>
            <person name="Robert C."/>
            <person name="Abergel C."/>
            <person name="Renesto P."/>
            <person name="Ogata H."/>
            <person name="La Scola B."/>
            <person name="Susan M."/>
            <person name="Claverie J.-M."/>
        </authorList>
    </citation>
    <scope>NUCLEOTIDE SEQUENCE [LARGE SCALE GENOMIC DNA]</scope>
    <source>
        <strain>Rowbotham-Bradford</strain>
    </source>
</reference>
<comment type="caution">
    <text evidence="1">Could be the product of a pseudogene. Seems to be the remnant of the duplication of R501, the polymerase subunit 1.</text>
</comment>
<sequence length="108" mass="12991">MGFNKEDRILINNNNSRISRGISERYKGKEGRIRSNMMGKRHDVKSLLEYLDSTCIPIENMLCNDDESSIKPQSKYHRQKKFRNNFSSQNKFHHQKIFPRQKFSKFHR</sequence>
<proteinExistence type="uncertain"/>
<keyword id="KW-1185">Reference proteome</keyword>
<name>RPO1H_MIMIV</name>
<protein>
    <recommendedName>
        <fullName>Putative DNA-directed RNA polymerase subunit 1 inactive homolog</fullName>
    </recommendedName>
</protein>
<gene>
    <name type="ordered locus">MIMI_R867</name>
</gene>
<dbReference type="EMBL" id="AY653733">
    <property type="protein sequence ID" value="AAV51125.1"/>
    <property type="molecule type" value="Genomic_DNA"/>
</dbReference>
<dbReference type="Proteomes" id="UP000001134">
    <property type="component" value="Genome"/>
</dbReference>
<dbReference type="SUPFAM" id="SSF64484">
    <property type="entry name" value="beta and beta-prime subunits of DNA dependent RNA-polymerase"/>
    <property type="match status" value="1"/>
</dbReference>
<organismHost>
    <name type="scientific">Acanthamoeba polyphaga</name>
    <name type="common">Amoeba</name>
    <dbReference type="NCBI Taxonomy" id="5757"/>
</organismHost>
<feature type="chain" id="PRO_0000309334" description="Putative DNA-directed RNA polymerase subunit 1 inactive homolog">
    <location>
        <begin position="1"/>
        <end position="108"/>
    </location>
</feature>
<organism>
    <name type="scientific">Acanthamoeba polyphaga mimivirus</name>
    <name type="common">APMV</name>
    <dbReference type="NCBI Taxonomy" id="212035"/>
    <lineage>
        <taxon>Viruses</taxon>
        <taxon>Varidnaviria</taxon>
        <taxon>Bamfordvirae</taxon>
        <taxon>Nucleocytoviricota</taxon>
        <taxon>Megaviricetes</taxon>
        <taxon>Imitervirales</taxon>
        <taxon>Mimiviridae</taxon>
        <taxon>Megamimivirinae</taxon>
        <taxon>Mimivirus</taxon>
        <taxon>Mimivirus bradfordmassiliense</taxon>
    </lineage>
</organism>
<evidence type="ECO:0000305" key="1"/>
<accession>Q5UP16</accession>